<reference key="1">
    <citation type="journal article" date="2009" name="PLoS Genet.">
        <title>Organised genome dynamics in the Escherichia coli species results in highly diverse adaptive paths.</title>
        <authorList>
            <person name="Touchon M."/>
            <person name="Hoede C."/>
            <person name="Tenaillon O."/>
            <person name="Barbe V."/>
            <person name="Baeriswyl S."/>
            <person name="Bidet P."/>
            <person name="Bingen E."/>
            <person name="Bonacorsi S."/>
            <person name="Bouchier C."/>
            <person name="Bouvet O."/>
            <person name="Calteau A."/>
            <person name="Chiapello H."/>
            <person name="Clermont O."/>
            <person name="Cruveiller S."/>
            <person name="Danchin A."/>
            <person name="Diard M."/>
            <person name="Dossat C."/>
            <person name="Karoui M.E."/>
            <person name="Frapy E."/>
            <person name="Garry L."/>
            <person name="Ghigo J.M."/>
            <person name="Gilles A.M."/>
            <person name="Johnson J."/>
            <person name="Le Bouguenec C."/>
            <person name="Lescat M."/>
            <person name="Mangenot S."/>
            <person name="Martinez-Jehanne V."/>
            <person name="Matic I."/>
            <person name="Nassif X."/>
            <person name="Oztas S."/>
            <person name="Petit M.A."/>
            <person name="Pichon C."/>
            <person name="Rouy Z."/>
            <person name="Ruf C.S."/>
            <person name="Schneider D."/>
            <person name="Tourret J."/>
            <person name="Vacherie B."/>
            <person name="Vallenet D."/>
            <person name="Medigue C."/>
            <person name="Rocha E.P.C."/>
            <person name="Denamur E."/>
        </authorList>
    </citation>
    <scope>NUCLEOTIDE SEQUENCE [LARGE SCALE GENOMIC DNA]</scope>
    <source>
        <strain>IAI39 / ExPEC</strain>
    </source>
</reference>
<protein>
    <recommendedName>
        <fullName evidence="1">Bifunctional protein Aas</fullName>
    </recommendedName>
    <domain>
        <recommendedName>
            <fullName evidence="1">2-acylglycerophosphoethanolamine acyltransferase</fullName>
            <ecNumber evidence="1">2.3.1.40</ecNumber>
        </recommendedName>
        <alternativeName>
            <fullName evidence="1">2-acyl-GPE acyltransferase</fullName>
        </alternativeName>
        <alternativeName>
            <fullName evidence="1">Acyl-[acyl-carrier-protein]--phospholipid O-acyltransferase</fullName>
        </alternativeName>
    </domain>
    <domain>
        <recommendedName>
            <fullName evidence="1">Acyl-[acyl-carrier-protein] synthetase</fullName>
            <ecNumber evidence="1">6.2.1.20</ecNumber>
        </recommendedName>
        <alternativeName>
            <fullName evidence="1">Acyl-ACP synthetase</fullName>
        </alternativeName>
        <alternativeName>
            <fullName evidence="1">Long-chain-fatty-acid--[acyl-carrier-protein] ligase</fullName>
        </alternativeName>
    </domain>
</protein>
<accession>B7NVY2</accession>
<name>AAS_ECO7I</name>
<feature type="chain" id="PRO_1000137887" description="Bifunctional protein Aas">
    <location>
        <begin position="1"/>
        <end position="719"/>
    </location>
</feature>
<feature type="transmembrane region" description="Helical" evidence="1">
    <location>
        <begin position="258"/>
        <end position="277"/>
    </location>
</feature>
<feature type="transmembrane region" description="Helical" evidence="1">
    <location>
        <begin position="409"/>
        <end position="433"/>
    </location>
</feature>
<feature type="region of interest" description="Acyltransferase">
    <location>
        <begin position="15"/>
        <end position="138"/>
    </location>
</feature>
<feature type="region of interest" description="AMP-binding">
    <location>
        <begin position="233"/>
        <end position="646"/>
    </location>
</feature>
<feature type="active site" evidence="1">
    <location>
        <position position="36"/>
    </location>
</feature>
<dbReference type="EC" id="2.3.1.40" evidence="1"/>
<dbReference type="EC" id="6.2.1.20" evidence="1"/>
<dbReference type="EMBL" id="CU928164">
    <property type="protein sequence ID" value="CAR19375.1"/>
    <property type="molecule type" value="Genomic_DNA"/>
</dbReference>
<dbReference type="RefSeq" id="WP_000899002.1">
    <property type="nucleotide sequence ID" value="NC_011750.1"/>
</dbReference>
<dbReference type="RefSeq" id="YP_002409180.1">
    <property type="nucleotide sequence ID" value="NC_011750.1"/>
</dbReference>
<dbReference type="SMR" id="B7NVY2"/>
<dbReference type="STRING" id="585057.ECIAI39_3256"/>
<dbReference type="KEGG" id="ect:ECIAI39_3256"/>
<dbReference type="PATRIC" id="fig|585057.6.peg.3382"/>
<dbReference type="HOGENOM" id="CLU_000022_59_8_6"/>
<dbReference type="Proteomes" id="UP000000749">
    <property type="component" value="Chromosome"/>
</dbReference>
<dbReference type="GO" id="GO:0005886">
    <property type="term" value="C:plasma membrane"/>
    <property type="evidence" value="ECO:0007669"/>
    <property type="project" value="UniProtKB-SubCell"/>
</dbReference>
<dbReference type="GO" id="GO:0008779">
    <property type="term" value="F:acyl-[acyl-carrier-protein]-phospholipid O-acyltransferase activity"/>
    <property type="evidence" value="ECO:0007669"/>
    <property type="project" value="UniProtKB-UniRule"/>
</dbReference>
<dbReference type="GO" id="GO:0005524">
    <property type="term" value="F:ATP binding"/>
    <property type="evidence" value="ECO:0007669"/>
    <property type="project" value="UniProtKB-KW"/>
</dbReference>
<dbReference type="GO" id="GO:0008922">
    <property type="term" value="F:long-chain fatty acid [acyl-carrier-protein] ligase activity"/>
    <property type="evidence" value="ECO:0007669"/>
    <property type="project" value="UniProtKB-UniRule"/>
</dbReference>
<dbReference type="GO" id="GO:0031956">
    <property type="term" value="F:medium-chain fatty acid-CoA ligase activity"/>
    <property type="evidence" value="ECO:0007669"/>
    <property type="project" value="TreeGrafter"/>
</dbReference>
<dbReference type="GO" id="GO:0006631">
    <property type="term" value="P:fatty acid metabolic process"/>
    <property type="evidence" value="ECO:0007669"/>
    <property type="project" value="InterPro"/>
</dbReference>
<dbReference type="GO" id="GO:0008654">
    <property type="term" value="P:phospholipid biosynthetic process"/>
    <property type="evidence" value="ECO:0007669"/>
    <property type="project" value="InterPro"/>
</dbReference>
<dbReference type="CDD" id="cd05909">
    <property type="entry name" value="AAS_C"/>
    <property type="match status" value="1"/>
</dbReference>
<dbReference type="CDD" id="cd07989">
    <property type="entry name" value="LPLAT_AGPAT-like"/>
    <property type="match status" value="1"/>
</dbReference>
<dbReference type="FunFam" id="3.30.300.30:FF:000009">
    <property type="entry name" value="Bifunctional protein Aas"/>
    <property type="match status" value="1"/>
</dbReference>
<dbReference type="FunFam" id="3.40.50.12780:FF:000009">
    <property type="entry name" value="Bifunctional protein Aas"/>
    <property type="match status" value="1"/>
</dbReference>
<dbReference type="Gene3D" id="3.30.300.30">
    <property type="match status" value="1"/>
</dbReference>
<dbReference type="Gene3D" id="3.40.50.12780">
    <property type="entry name" value="N-terminal domain of ligase-like"/>
    <property type="match status" value="1"/>
</dbReference>
<dbReference type="HAMAP" id="MF_01162">
    <property type="entry name" value="Aas"/>
    <property type="match status" value="1"/>
</dbReference>
<dbReference type="InterPro" id="IPR023775">
    <property type="entry name" value="Aas"/>
</dbReference>
<dbReference type="InterPro" id="IPR045851">
    <property type="entry name" value="AMP-bd_C_sf"/>
</dbReference>
<dbReference type="InterPro" id="IPR020845">
    <property type="entry name" value="AMP-binding_CS"/>
</dbReference>
<dbReference type="InterPro" id="IPR000873">
    <property type="entry name" value="AMP-dep_synth/lig_dom"/>
</dbReference>
<dbReference type="InterPro" id="IPR042099">
    <property type="entry name" value="ANL_N_sf"/>
</dbReference>
<dbReference type="InterPro" id="IPR002123">
    <property type="entry name" value="Plipid/glycerol_acylTrfase"/>
</dbReference>
<dbReference type="NCBIfam" id="NF005959">
    <property type="entry name" value="PRK08043.1"/>
    <property type="match status" value="1"/>
</dbReference>
<dbReference type="PANTHER" id="PTHR43201">
    <property type="entry name" value="ACYL-COA SYNTHETASE"/>
    <property type="match status" value="1"/>
</dbReference>
<dbReference type="PANTHER" id="PTHR43201:SF8">
    <property type="entry name" value="ACYL-COA SYNTHETASE FAMILY MEMBER 3"/>
    <property type="match status" value="1"/>
</dbReference>
<dbReference type="Pfam" id="PF01553">
    <property type="entry name" value="Acyltransferase"/>
    <property type="match status" value="1"/>
</dbReference>
<dbReference type="Pfam" id="PF00501">
    <property type="entry name" value="AMP-binding"/>
    <property type="match status" value="1"/>
</dbReference>
<dbReference type="SMART" id="SM00563">
    <property type="entry name" value="PlsC"/>
    <property type="match status" value="1"/>
</dbReference>
<dbReference type="SUPFAM" id="SSF56801">
    <property type="entry name" value="Acetyl-CoA synthetase-like"/>
    <property type="match status" value="1"/>
</dbReference>
<dbReference type="SUPFAM" id="SSF69593">
    <property type="entry name" value="Glycerol-3-phosphate (1)-acyltransferase"/>
    <property type="match status" value="1"/>
</dbReference>
<dbReference type="PROSITE" id="PS00455">
    <property type="entry name" value="AMP_BINDING"/>
    <property type="match status" value="1"/>
</dbReference>
<comment type="function">
    <text evidence="1">Plays a role in lysophospholipid acylation. Transfers fatty acids to the 1-position via an enzyme-bound acyl-ACP intermediate in the presence of ATP and magnesium. Its physiological function is to regenerate phosphatidylethanolamine from 2-acyl-glycero-3-phosphoethanolamine (2-acyl-GPE) formed by transacylation reactions or degradation by phospholipase A1.</text>
</comment>
<comment type="catalytic activity">
    <reaction evidence="1">
        <text>a 2-acyl-sn-glycero-3-phosphoethanolamine + a fatty acyl-[ACP] = a 1,2-diacyl-sn-glycero-3-phosphoethanolamine + holo-[ACP]</text>
        <dbReference type="Rhea" id="RHEA:10304"/>
        <dbReference type="Rhea" id="RHEA-COMP:9685"/>
        <dbReference type="Rhea" id="RHEA-COMP:14125"/>
        <dbReference type="ChEBI" id="CHEBI:64479"/>
        <dbReference type="ChEBI" id="CHEBI:64612"/>
        <dbReference type="ChEBI" id="CHEBI:65213"/>
        <dbReference type="ChEBI" id="CHEBI:138651"/>
        <dbReference type="EC" id="2.3.1.40"/>
    </reaction>
</comment>
<comment type="catalytic activity">
    <reaction evidence="1">
        <text>a long-chain fatty acid + holo-[ACP] + ATP = a long-chain fatty acyl-[ACP] + AMP + diphosphate</text>
        <dbReference type="Rhea" id="RHEA:45588"/>
        <dbReference type="Rhea" id="RHEA-COMP:9685"/>
        <dbReference type="Rhea" id="RHEA-COMP:12682"/>
        <dbReference type="ChEBI" id="CHEBI:30616"/>
        <dbReference type="ChEBI" id="CHEBI:33019"/>
        <dbReference type="ChEBI" id="CHEBI:57560"/>
        <dbReference type="ChEBI" id="CHEBI:64479"/>
        <dbReference type="ChEBI" id="CHEBI:133243"/>
        <dbReference type="ChEBI" id="CHEBI:456215"/>
        <dbReference type="EC" id="6.2.1.20"/>
    </reaction>
</comment>
<comment type="subcellular location">
    <subcellularLocation>
        <location evidence="1">Cell inner membrane</location>
        <topology evidence="1">Multi-pass membrane protein</topology>
    </subcellularLocation>
</comment>
<comment type="similarity">
    <text evidence="1">In the N-terminal section; belongs to the 2-acyl-GPE acetyltransferase family.</text>
</comment>
<comment type="similarity">
    <text evidence="1">In the C-terminal section; belongs to the ATP-dependent AMP-binding enzyme family.</text>
</comment>
<sequence>MLFSFFRNLCRVLYRVRVTGDNQALKGERVLITPNHVSFIDGILLALFLPVRPVFAVYTSISQQWYMRWLKSFIDFVPLDPTQPMAIKHLVRLVEQGRPVVIFPEGRITTTGSLMKIYDGAGFVAAKSGATVIPVRIEGAELTHFSRLKGLVKRRLFPQITLHILPPTQVQMPDAPRARDRRKIAGEMLHQIMMEARMAVRPRETLYESLLSAMYRFGAGKKCVEDVNFTPDSYRKLLTKTLFVGRILEKYSVEGERIGLMLPNAGISAAVIFGAIARRRIPAMMNYTAGVKGLTSAITAAEIKTIFTSRQFLDKGKLWHLPEQLTQVRWVYLEDLKADVTTADKVWIFAHLLMPRLAQVKQQPEEEALILFTSGSEGHPKGVVHSHKSILANVEQIKTIADFTTNDRFMSALPLFHSFGLTVGLFTPLLTGAEVFLYPSPLHYRIVPELVYDRSCTVLFGSSTFLGHYARFANPYDFYRLRYVVAGAEKLQESTKQLWQDKFGLRILEGYGVTECAPVVSINVPMAAKPGTVGRILPGMDARLLSVPGIEEGGRLQLKGPNIMNGYLRVEKPGVLEVPTAENVRGEMERGWYDTGDIVRFDEQGFVQIQGRAKRFAKIAGEMVSLEMVEQLALGVSPDKVHATAIKSDASKGEALVLFTTDNELTRDKLQQYAREHGVPELAVPRDIRYLKQMPLLGSGKPDFVTLKSWVDEAEQHDE</sequence>
<proteinExistence type="inferred from homology"/>
<evidence type="ECO:0000255" key="1">
    <source>
        <dbReference type="HAMAP-Rule" id="MF_01162"/>
    </source>
</evidence>
<gene>
    <name evidence="1" type="primary">aas</name>
    <name type="ordered locus">ECIAI39_3256</name>
</gene>
<keyword id="KW-0012">Acyltransferase</keyword>
<keyword id="KW-0067">ATP-binding</keyword>
<keyword id="KW-0997">Cell inner membrane</keyword>
<keyword id="KW-1003">Cell membrane</keyword>
<keyword id="KW-0436">Ligase</keyword>
<keyword id="KW-0472">Membrane</keyword>
<keyword id="KW-0511">Multifunctional enzyme</keyword>
<keyword id="KW-0547">Nucleotide-binding</keyword>
<keyword id="KW-0808">Transferase</keyword>
<keyword id="KW-0812">Transmembrane</keyword>
<keyword id="KW-1133">Transmembrane helix</keyword>
<organism>
    <name type="scientific">Escherichia coli O7:K1 (strain IAI39 / ExPEC)</name>
    <dbReference type="NCBI Taxonomy" id="585057"/>
    <lineage>
        <taxon>Bacteria</taxon>
        <taxon>Pseudomonadati</taxon>
        <taxon>Pseudomonadota</taxon>
        <taxon>Gammaproteobacteria</taxon>
        <taxon>Enterobacterales</taxon>
        <taxon>Enterobacteriaceae</taxon>
        <taxon>Escherichia</taxon>
    </lineage>
</organism>